<gene>
    <name type="primary">WRKY60</name>
    <name type="ordered locus">At2g25000</name>
    <name type="ORF">F27C12.8</name>
</gene>
<comment type="function">
    <text evidence="1">Transcription factor. Interacts specifically with the W box (5'-(T)TGAC[CT]-3'), a frequently occurring elicitor-responsive cis-acting element (By similarity).</text>
</comment>
<comment type="interaction">
    <interactant intactId="EBI-2112777">
        <id>Q9SK33</id>
    </interactant>
    <interactant intactId="EBI-1100687">
        <id>Q9ZNV8</id>
        <label>AHP2</label>
    </interactant>
    <organismsDiffer>false</organismsDiffer>
    <experiments>3</experiments>
</comment>
<comment type="interaction">
    <interactant intactId="EBI-2112777">
        <id>Q9SK33</id>
    </interactant>
    <interactant intactId="EBI-1573499">
        <id>Q9LNW3</id>
        <label>AIP1</label>
    </interactant>
    <organismsDiffer>false</organismsDiffer>
    <experiments>3</experiments>
</comment>
<comment type="interaction">
    <interactant intactId="EBI-2112777">
        <id>Q9SK33</id>
    </interactant>
    <interactant intactId="EBI-1100737">
        <id>Q8L9Y3</id>
        <label>ARR14</label>
    </interactant>
    <organismsDiffer>false</organismsDiffer>
    <experiments>3</experiments>
</comment>
<comment type="interaction">
    <interactant intactId="EBI-2112777">
        <id>Q9SK33</id>
    </interactant>
    <interactant intactId="EBI-602912">
        <id>Q8L5Y6</id>
        <label>CAND1</label>
    </interactant>
    <organismsDiffer>false</organismsDiffer>
    <experiments>3</experiments>
</comment>
<comment type="interaction">
    <interactant intactId="EBI-2112777">
        <id>Q9SK33</id>
    </interactant>
    <interactant intactId="EBI-4457746">
        <id>Q9LV52</id>
        <label>HSFC1</label>
    </interactant>
    <organismsDiffer>false</organismsDiffer>
    <experiments>3</experiments>
</comment>
<comment type="interaction">
    <interactant intactId="EBI-2112777">
        <id>Q9SK33</id>
    </interactant>
    <interactant intactId="EBI-4458966">
        <id>Q9LTF2</id>
        <label>RPS10C</label>
    </interactant>
    <organismsDiffer>false</organismsDiffer>
    <experiments>4</experiments>
</comment>
<comment type="interaction">
    <interactant intactId="EBI-2112777">
        <id>Q9SK33</id>
    </interactant>
    <interactant intactId="EBI-1993349">
        <id>Q9C5T4</id>
        <label>WRKY18</label>
    </interactant>
    <organismsDiffer>false</organismsDiffer>
    <experiments>7</experiments>
</comment>
<comment type="interaction">
    <interactant intactId="EBI-2112777">
        <id>Q9SK33</id>
    </interactant>
    <interactant intactId="EBI-15210240">
        <id>Q9CAR4</id>
        <label>WRKY36</label>
    </interactant>
    <organismsDiffer>false</organismsDiffer>
    <experiments>3</experiments>
</comment>
<comment type="interaction">
    <interactant intactId="EBI-2112777">
        <id>Q9SK33</id>
    </interactant>
    <interactant intactId="EBI-1993363">
        <id>Q9SAH7</id>
        <label>WRKY40</label>
    </interactant>
    <organismsDiffer>false</organismsDiffer>
    <experiments>5</experiments>
</comment>
<comment type="interaction">
    <interactant intactId="EBI-2112777">
        <id>Q9SK33</id>
    </interactant>
    <interactant intactId="EBI-2112777">
        <id>Q9SK33</id>
        <label>WRKY60</label>
    </interactant>
    <organismsDiffer>false</organismsDiffer>
    <experiments>6</experiments>
</comment>
<comment type="subcellular location">
    <subcellularLocation>
        <location evidence="2">Nucleus</location>
    </subcellularLocation>
</comment>
<sequence>MDYDPNTNPFDLHFSGKLPKREVSASASKVVEKKWLVKDEKRNMLQDEINRVNSENKKLTEMLARVCEKYYALNNLMEELQSRKSPESVNFQNKQLTGKRKQELDEFVSSPIGLSLGPIENITNDKATVSTAYFAAEKSDTSLTVKDGYQWRKYGQKITRDNPSPRAYFRCSFSPSCLVKKKVQRSAEDPSFLVATYEGTHNHTGPHASVSRTVKLDLVQGGLEPVEEKKERGTIQEVLVQQMASSLTKDPKFTAALATAISGRLIEHSRT</sequence>
<protein>
    <recommendedName>
        <fullName>Probable WRKY transcription factor 60</fullName>
    </recommendedName>
    <alternativeName>
        <fullName>WRKY DNA-binding protein 60</fullName>
    </alternativeName>
</protein>
<feature type="chain" id="PRO_0000133701" description="Probable WRKY transcription factor 60">
    <location>
        <begin position="1"/>
        <end position="271"/>
    </location>
</feature>
<feature type="DNA-binding region" description="WRKY" evidence="2">
    <location>
        <begin position="140"/>
        <end position="206"/>
    </location>
</feature>
<feature type="sequence conflict" description="In Ref. 1; AAL50787." evidence="3" ref="1">
    <original>P</original>
    <variation>S</variation>
    <location>
        <position position="251"/>
    </location>
</feature>
<keyword id="KW-0238">DNA-binding</keyword>
<keyword id="KW-0539">Nucleus</keyword>
<keyword id="KW-1185">Reference proteome</keyword>
<keyword id="KW-0804">Transcription</keyword>
<keyword id="KW-0805">Transcription regulation</keyword>
<name>WRK60_ARATH</name>
<accession>Q9SK33</accession>
<accession>Q8VWV4</accession>
<organism>
    <name type="scientific">Arabidopsis thaliana</name>
    <name type="common">Mouse-ear cress</name>
    <dbReference type="NCBI Taxonomy" id="3702"/>
    <lineage>
        <taxon>Eukaryota</taxon>
        <taxon>Viridiplantae</taxon>
        <taxon>Streptophyta</taxon>
        <taxon>Embryophyta</taxon>
        <taxon>Tracheophyta</taxon>
        <taxon>Spermatophyta</taxon>
        <taxon>Magnoliopsida</taxon>
        <taxon>eudicotyledons</taxon>
        <taxon>Gunneridae</taxon>
        <taxon>Pentapetalae</taxon>
        <taxon>rosids</taxon>
        <taxon>malvids</taxon>
        <taxon>Brassicales</taxon>
        <taxon>Brassicaceae</taxon>
        <taxon>Camelineae</taxon>
        <taxon>Arabidopsis</taxon>
    </lineage>
</organism>
<evidence type="ECO:0000250" key="1"/>
<evidence type="ECO:0000255" key="2">
    <source>
        <dbReference type="PROSITE-ProRule" id="PRU00223"/>
    </source>
</evidence>
<evidence type="ECO:0000305" key="3"/>
<proteinExistence type="evidence at protein level"/>
<reference key="1">
    <citation type="submission" date="2001-11" db="EMBL/GenBank/DDBJ databases">
        <title>Arabidopsis thaliana transcription factor WRKY60.</title>
        <authorList>
            <person name="Kushnir S."/>
            <person name="Ulker B."/>
            <person name="Somssich I.E."/>
        </authorList>
    </citation>
    <scope>NUCLEOTIDE SEQUENCE [MRNA]</scope>
    <source>
        <strain>cv. C24</strain>
        <tissue>Flower</tissue>
    </source>
</reference>
<reference key="2">
    <citation type="journal article" date="1999" name="Nature">
        <title>Sequence and analysis of chromosome 2 of the plant Arabidopsis thaliana.</title>
        <authorList>
            <person name="Lin X."/>
            <person name="Kaul S."/>
            <person name="Rounsley S.D."/>
            <person name="Shea T.P."/>
            <person name="Benito M.-I."/>
            <person name="Town C.D."/>
            <person name="Fujii C.Y."/>
            <person name="Mason T.M."/>
            <person name="Bowman C.L."/>
            <person name="Barnstead M.E."/>
            <person name="Feldblyum T.V."/>
            <person name="Buell C.R."/>
            <person name="Ketchum K.A."/>
            <person name="Lee J.J."/>
            <person name="Ronning C.M."/>
            <person name="Koo H.L."/>
            <person name="Moffat K.S."/>
            <person name="Cronin L.A."/>
            <person name="Shen M."/>
            <person name="Pai G."/>
            <person name="Van Aken S."/>
            <person name="Umayam L."/>
            <person name="Tallon L.J."/>
            <person name="Gill J.E."/>
            <person name="Adams M.D."/>
            <person name="Carrera A.J."/>
            <person name="Creasy T.H."/>
            <person name="Goodman H.M."/>
            <person name="Somerville C.R."/>
            <person name="Copenhaver G.P."/>
            <person name="Preuss D."/>
            <person name="Nierman W.C."/>
            <person name="White O."/>
            <person name="Eisen J.A."/>
            <person name="Salzberg S.L."/>
            <person name="Fraser C.M."/>
            <person name="Venter J.C."/>
        </authorList>
    </citation>
    <scope>NUCLEOTIDE SEQUENCE [LARGE SCALE GENOMIC DNA]</scope>
    <source>
        <strain>cv. Columbia</strain>
    </source>
</reference>
<reference key="3">
    <citation type="journal article" date="2017" name="Plant J.">
        <title>Araport11: a complete reannotation of the Arabidopsis thaliana reference genome.</title>
        <authorList>
            <person name="Cheng C.Y."/>
            <person name="Krishnakumar V."/>
            <person name="Chan A.P."/>
            <person name="Thibaud-Nissen F."/>
            <person name="Schobel S."/>
            <person name="Town C.D."/>
        </authorList>
    </citation>
    <scope>GENOME REANNOTATION</scope>
    <source>
        <strain>cv. Columbia</strain>
    </source>
</reference>
<reference key="4">
    <citation type="journal article" date="2003" name="Science">
        <title>Empirical analysis of transcriptional activity in the Arabidopsis genome.</title>
        <authorList>
            <person name="Yamada K."/>
            <person name="Lim J."/>
            <person name="Dale J.M."/>
            <person name="Chen H."/>
            <person name="Shinn P."/>
            <person name="Palm C.J."/>
            <person name="Southwick A.M."/>
            <person name="Wu H.C."/>
            <person name="Kim C.J."/>
            <person name="Nguyen M."/>
            <person name="Pham P.K."/>
            <person name="Cheuk R.F."/>
            <person name="Karlin-Newmann G."/>
            <person name="Liu S.X."/>
            <person name="Lam B."/>
            <person name="Sakano H."/>
            <person name="Wu T."/>
            <person name="Yu G."/>
            <person name="Miranda M."/>
            <person name="Quach H.L."/>
            <person name="Tripp M."/>
            <person name="Chang C.H."/>
            <person name="Lee J.M."/>
            <person name="Toriumi M.J."/>
            <person name="Chan M.M."/>
            <person name="Tang C.C."/>
            <person name="Onodera C.S."/>
            <person name="Deng J.M."/>
            <person name="Akiyama K."/>
            <person name="Ansari Y."/>
            <person name="Arakawa T."/>
            <person name="Banh J."/>
            <person name="Banno F."/>
            <person name="Bowser L."/>
            <person name="Brooks S.Y."/>
            <person name="Carninci P."/>
            <person name="Chao Q."/>
            <person name="Choy N."/>
            <person name="Enju A."/>
            <person name="Goldsmith A.D."/>
            <person name="Gurjal M."/>
            <person name="Hansen N.F."/>
            <person name="Hayashizaki Y."/>
            <person name="Johnson-Hopson C."/>
            <person name="Hsuan V.W."/>
            <person name="Iida K."/>
            <person name="Karnes M."/>
            <person name="Khan S."/>
            <person name="Koesema E."/>
            <person name="Ishida J."/>
            <person name="Jiang P.X."/>
            <person name="Jones T."/>
            <person name="Kawai J."/>
            <person name="Kamiya A."/>
            <person name="Meyers C."/>
            <person name="Nakajima M."/>
            <person name="Narusaka M."/>
            <person name="Seki M."/>
            <person name="Sakurai T."/>
            <person name="Satou M."/>
            <person name="Tamse R."/>
            <person name="Vaysberg M."/>
            <person name="Wallender E.K."/>
            <person name="Wong C."/>
            <person name="Yamamura Y."/>
            <person name="Yuan S."/>
            <person name="Shinozaki K."/>
            <person name="Davis R.W."/>
            <person name="Theologis A."/>
            <person name="Ecker J.R."/>
        </authorList>
    </citation>
    <scope>NUCLEOTIDE SEQUENCE [LARGE SCALE MRNA]</scope>
    <source>
        <strain>cv. Columbia</strain>
    </source>
</reference>
<dbReference type="EMBL" id="AF452177">
    <property type="protein sequence ID" value="AAL50787.1"/>
    <property type="molecule type" value="mRNA"/>
</dbReference>
<dbReference type="EMBL" id="AC006585">
    <property type="protein sequence ID" value="AAD23013.1"/>
    <property type="molecule type" value="Genomic_DNA"/>
</dbReference>
<dbReference type="EMBL" id="CP002685">
    <property type="protein sequence ID" value="AEC07648.1"/>
    <property type="molecule type" value="Genomic_DNA"/>
</dbReference>
<dbReference type="EMBL" id="BT004611">
    <property type="protein sequence ID" value="AAO42857.1"/>
    <property type="molecule type" value="mRNA"/>
</dbReference>
<dbReference type="PIR" id="A84643">
    <property type="entry name" value="A84643"/>
</dbReference>
<dbReference type="RefSeq" id="NP_180072.1">
    <property type="nucleotide sequence ID" value="NM_128058.4"/>
</dbReference>
<dbReference type="SMR" id="Q9SK33"/>
<dbReference type="BioGRID" id="2391">
    <property type="interactions" value="35"/>
</dbReference>
<dbReference type="FunCoup" id="Q9SK33">
    <property type="interactions" value="2"/>
</dbReference>
<dbReference type="IntAct" id="Q9SK33">
    <property type="interactions" value="35"/>
</dbReference>
<dbReference type="STRING" id="3702.Q9SK33"/>
<dbReference type="PaxDb" id="3702-AT2G25000.1"/>
<dbReference type="ProteomicsDB" id="234390"/>
<dbReference type="EnsemblPlants" id="AT2G25000.1">
    <property type="protein sequence ID" value="AT2G25000.1"/>
    <property type="gene ID" value="AT2G25000"/>
</dbReference>
<dbReference type="GeneID" id="817039"/>
<dbReference type="Gramene" id="AT2G25000.1">
    <property type="protein sequence ID" value="AT2G25000.1"/>
    <property type="gene ID" value="AT2G25000"/>
</dbReference>
<dbReference type="KEGG" id="ath:AT2G25000"/>
<dbReference type="Araport" id="AT2G25000"/>
<dbReference type="TAIR" id="AT2G25000">
    <property type="gene designation" value="WRKY60"/>
</dbReference>
<dbReference type="eggNOG" id="ENOG502QR7M">
    <property type="taxonomic scope" value="Eukaryota"/>
</dbReference>
<dbReference type="HOGENOM" id="CLU_047067_0_0_1"/>
<dbReference type="InParanoid" id="Q9SK33"/>
<dbReference type="PhylomeDB" id="Q9SK33"/>
<dbReference type="PRO" id="PR:Q9SK33"/>
<dbReference type="Proteomes" id="UP000006548">
    <property type="component" value="Chromosome 2"/>
</dbReference>
<dbReference type="ExpressionAtlas" id="Q9SK33">
    <property type="expression patterns" value="baseline and differential"/>
</dbReference>
<dbReference type="GO" id="GO:0005634">
    <property type="term" value="C:nucleus"/>
    <property type="evidence" value="ECO:0000314"/>
    <property type="project" value="TAIR"/>
</dbReference>
<dbReference type="GO" id="GO:0003700">
    <property type="term" value="F:DNA-binding transcription factor activity"/>
    <property type="evidence" value="ECO:0000250"/>
    <property type="project" value="TAIR"/>
</dbReference>
<dbReference type="GO" id="GO:0042802">
    <property type="term" value="F:identical protein binding"/>
    <property type="evidence" value="ECO:0000353"/>
    <property type="project" value="IntAct"/>
</dbReference>
<dbReference type="GO" id="GO:0043565">
    <property type="term" value="F:sequence-specific DNA binding"/>
    <property type="evidence" value="ECO:0007669"/>
    <property type="project" value="InterPro"/>
</dbReference>
<dbReference type="GO" id="GO:0042742">
    <property type="term" value="P:defense response to bacterium"/>
    <property type="evidence" value="ECO:0000270"/>
    <property type="project" value="TAIR"/>
</dbReference>
<dbReference type="GO" id="GO:0050832">
    <property type="term" value="P:defense response to fungus"/>
    <property type="evidence" value="ECO:0000270"/>
    <property type="project" value="TAIR"/>
</dbReference>
<dbReference type="GO" id="GO:0031347">
    <property type="term" value="P:regulation of defense response"/>
    <property type="evidence" value="ECO:0000315"/>
    <property type="project" value="TAIR"/>
</dbReference>
<dbReference type="GO" id="GO:0002237">
    <property type="term" value="P:response to molecule of bacterial origin"/>
    <property type="evidence" value="ECO:0000315"/>
    <property type="project" value="TAIR"/>
</dbReference>
<dbReference type="GO" id="GO:0009751">
    <property type="term" value="P:response to salicylic acid"/>
    <property type="evidence" value="ECO:0000270"/>
    <property type="project" value="TAIR"/>
</dbReference>
<dbReference type="FunFam" id="2.20.25.80:FF:000008">
    <property type="entry name" value="WRKY transcription factor 40"/>
    <property type="match status" value="1"/>
</dbReference>
<dbReference type="Gene3D" id="2.20.25.80">
    <property type="entry name" value="WRKY domain"/>
    <property type="match status" value="1"/>
</dbReference>
<dbReference type="InterPro" id="IPR003657">
    <property type="entry name" value="WRKY_dom"/>
</dbReference>
<dbReference type="InterPro" id="IPR036576">
    <property type="entry name" value="WRKY_dom_sf"/>
</dbReference>
<dbReference type="InterPro" id="IPR044810">
    <property type="entry name" value="WRKY_plant"/>
</dbReference>
<dbReference type="PANTHER" id="PTHR31429:SF76">
    <property type="entry name" value="WRKY FAMILY TRANSCRIPTION FACTOR-RELATED"/>
    <property type="match status" value="1"/>
</dbReference>
<dbReference type="PANTHER" id="PTHR31429">
    <property type="entry name" value="WRKY TRANSCRIPTION FACTOR 36-RELATED"/>
    <property type="match status" value="1"/>
</dbReference>
<dbReference type="Pfam" id="PF03106">
    <property type="entry name" value="WRKY"/>
    <property type="match status" value="1"/>
</dbReference>
<dbReference type="SMART" id="SM00774">
    <property type="entry name" value="WRKY"/>
    <property type="match status" value="1"/>
</dbReference>
<dbReference type="SUPFAM" id="SSF118290">
    <property type="entry name" value="WRKY DNA-binding domain"/>
    <property type="match status" value="1"/>
</dbReference>
<dbReference type="PROSITE" id="PS50811">
    <property type="entry name" value="WRKY"/>
    <property type="match status" value="1"/>
</dbReference>